<evidence type="ECO:0000255" key="1">
    <source>
        <dbReference type="HAMAP-Rule" id="MF_00088"/>
    </source>
</evidence>
<evidence type="ECO:0000269" key="2">
    <source>
    </source>
</evidence>
<evidence type="ECO:0000303" key="3">
    <source>
    </source>
</evidence>
<evidence type="ECO:0000305" key="4">
    <source>
    </source>
</evidence>
<protein>
    <recommendedName>
        <fullName evidence="1">RNA-binding protein KhpA</fullName>
    </recommendedName>
    <alternativeName>
        <fullName evidence="1 3">KH-domain protein A</fullName>
    </alternativeName>
</protein>
<dbReference type="EMBL" id="AE005672">
    <property type="protein sequence ID" value="AAK74914.1"/>
    <property type="molecule type" value="Genomic_DNA"/>
</dbReference>
<dbReference type="SMR" id="A0A0H2UPF7"/>
<dbReference type="PaxDb" id="170187-SP_0776"/>
<dbReference type="EnsemblBacteria" id="AAK74914">
    <property type="protein sequence ID" value="AAK74914"/>
    <property type="gene ID" value="SP_0776"/>
</dbReference>
<dbReference type="KEGG" id="spn:SP_0776"/>
<dbReference type="eggNOG" id="COG1837">
    <property type="taxonomic scope" value="Bacteria"/>
</dbReference>
<dbReference type="PhylomeDB" id="A0A0H2UPF7"/>
<dbReference type="BioCyc" id="SPNE170187:G1FZB-791-MONOMER"/>
<dbReference type="Proteomes" id="UP000000585">
    <property type="component" value="Chromosome"/>
</dbReference>
<dbReference type="GO" id="GO:0005737">
    <property type="term" value="C:cytoplasm"/>
    <property type="evidence" value="ECO:0007669"/>
    <property type="project" value="UniProtKB-SubCell"/>
</dbReference>
<dbReference type="GO" id="GO:0003723">
    <property type="term" value="F:RNA binding"/>
    <property type="evidence" value="ECO:0007669"/>
    <property type="project" value="UniProtKB-UniRule"/>
</dbReference>
<dbReference type="GO" id="GO:0071555">
    <property type="term" value="P:cell wall organization"/>
    <property type="evidence" value="ECO:0007669"/>
    <property type="project" value="UniProtKB-KW"/>
</dbReference>
<dbReference type="GO" id="GO:0009252">
    <property type="term" value="P:peptidoglycan biosynthetic process"/>
    <property type="evidence" value="ECO:0007669"/>
    <property type="project" value="UniProtKB-UniRule"/>
</dbReference>
<dbReference type="GO" id="GO:0008360">
    <property type="term" value="P:regulation of cell shape"/>
    <property type="evidence" value="ECO:0007669"/>
    <property type="project" value="UniProtKB-KW"/>
</dbReference>
<dbReference type="CDD" id="cd22533">
    <property type="entry name" value="KH-II_YlqC-like"/>
    <property type="match status" value="1"/>
</dbReference>
<dbReference type="Gene3D" id="3.30.300.20">
    <property type="match status" value="1"/>
</dbReference>
<dbReference type="HAMAP" id="MF_00088">
    <property type="entry name" value="KhpA"/>
    <property type="match status" value="1"/>
</dbReference>
<dbReference type="InterPro" id="IPR015946">
    <property type="entry name" value="KH_dom-like_a/b"/>
</dbReference>
<dbReference type="InterPro" id="IPR020627">
    <property type="entry name" value="KhpA"/>
</dbReference>
<dbReference type="PANTHER" id="PTHR34654:SF1">
    <property type="entry name" value="RNA-BINDING PROTEIN KHPA"/>
    <property type="match status" value="1"/>
</dbReference>
<dbReference type="PANTHER" id="PTHR34654">
    <property type="entry name" value="UPF0109 PROTEIN SCO5592"/>
    <property type="match status" value="1"/>
</dbReference>
<dbReference type="Pfam" id="PF13083">
    <property type="entry name" value="KH_KhpA-B"/>
    <property type="match status" value="1"/>
</dbReference>
<dbReference type="PROSITE" id="PS50084">
    <property type="entry name" value="KH_TYPE_1"/>
    <property type="match status" value="1"/>
</dbReference>
<feature type="chain" id="PRO_0000454539" description="RNA-binding protein KhpA">
    <location>
        <begin position="1"/>
        <end position="79"/>
    </location>
</feature>
<feature type="domain" description="KH" evidence="1">
    <location>
        <begin position="32"/>
        <end position="79"/>
    </location>
</feature>
<sequence length="79" mass="8994">MDTIENLIIAIVKPLISQPDALTIKIEDTPEFLEYHLNLDQSDVGRVIGRKGRTISAIRTIVYSVPTEYKKVRIVIDEK</sequence>
<accession>A0A0H2UPF7</accession>
<proteinExistence type="inferred from homology"/>
<gene>
    <name evidence="1 3" type="primary">khpA</name>
    <name type="ordered locus">SP_0776</name>
</gene>
<keyword id="KW-0133">Cell shape</keyword>
<keyword id="KW-0961">Cell wall biogenesis/degradation</keyword>
<keyword id="KW-0143">Chaperone</keyword>
<keyword id="KW-0963">Cytoplasm</keyword>
<keyword id="KW-1185">Reference proteome</keyword>
<keyword id="KW-0694">RNA-binding</keyword>
<comment type="function">
    <text evidence="1 2">A probable RNA chaperone. Forms a complex with KhpB which binds to cellular RNA and controls its expression. Plays a role in peptidoglycan (PG) homeostasis and cell length regulation.</text>
</comment>
<comment type="function">
    <text evidence="4">Probably plays a role in PG homeostasis and regulating peripheral PG synthesis.</text>
</comment>
<comment type="subunit">
    <text evidence="1">Forms a complex with KhpB.</text>
</comment>
<comment type="subcellular location">
    <subcellularLocation>
        <location evidence="1">Cytoplasm</location>
    </subcellularLocation>
</comment>
<comment type="disruption phenotype">
    <text evidence="2">Grows slowly and is smaller than wild-type; estimated to be about 50% of the volume of wild-type cells.</text>
</comment>
<comment type="similarity">
    <text evidence="1">Belongs to the KhpA RNA-binding protein family.</text>
</comment>
<organism>
    <name type="scientific">Streptococcus pneumoniae serotype 4 (strain ATCC BAA-334 / TIGR4)</name>
    <dbReference type="NCBI Taxonomy" id="170187"/>
    <lineage>
        <taxon>Bacteria</taxon>
        <taxon>Bacillati</taxon>
        <taxon>Bacillota</taxon>
        <taxon>Bacilli</taxon>
        <taxon>Lactobacillales</taxon>
        <taxon>Streptococcaceae</taxon>
        <taxon>Streptococcus</taxon>
    </lineage>
</organism>
<reference key="1">
    <citation type="journal article" date="2001" name="Science">
        <title>Complete genome sequence of a virulent isolate of Streptococcus pneumoniae.</title>
        <authorList>
            <person name="Tettelin H."/>
            <person name="Nelson K.E."/>
            <person name="Paulsen I.T."/>
            <person name="Eisen J.A."/>
            <person name="Read T.D."/>
            <person name="Peterson S.N."/>
            <person name="Heidelberg J.F."/>
            <person name="DeBoy R.T."/>
            <person name="Haft D.H."/>
            <person name="Dodson R.J."/>
            <person name="Durkin A.S."/>
            <person name="Gwinn M.L."/>
            <person name="Kolonay J.F."/>
            <person name="Nelson W.C."/>
            <person name="Peterson J.D."/>
            <person name="Umayam L.A."/>
            <person name="White O."/>
            <person name="Salzberg S.L."/>
            <person name="Lewis M.R."/>
            <person name="Radune D."/>
            <person name="Holtzapple E.K."/>
            <person name="Khouri H.M."/>
            <person name="Wolf A.M."/>
            <person name="Utterback T.R."/>
            <person name="Hansen C.L."/>
            <person name="McDonald L.A."/>
            <person name="Feldblyum T.V."/>
            <person name="Angiuoli S.V."/>
            <person name="Dickinson T."/>
            <person name="Hickey E.K."/>
            <person name="Holt I.E."/>
            <person name="Loftus B.J."/>
            <person name="Yang F."/>
            <person name="Smith H.O."/>
            <person name="Venter J.C."/>
            <person name="Dougherty B.A."/>
            <person name="Morrison D.A."/>
            <person name="Hollingshead S.K."/>
            <person name="Fraser C.M."/>
        </authorList>
    </citation>
    <scope>NUCLEOTIDE SEQUENCE [LARGE SCALE GENOMIC DNA]</scope>
    <source>
        <strain>ATCC BAA-334 / TIGR4</strain>
    </source>
</reference>
<reference key="2">
    <citation type="journal article" date="2017" name="Mol. Microbiol.">
        <title>Absence of the KhpA and KhpB (JAG/EloR) RNA-binding proteins suppresses the requirement for PBP2b by overproduction of FtsA in Streptococcus pneumoniae D39.</title>
        <authorList>
            <person name="Zheng J.J."/>
            <person name="Perez A.J."/>
            <person name="Tsui H.T."/>
            <person name="Massidda O."/>
            <person name="Winkler M.E."/>
        </authorList>
    </citation>
    <scope>FUNCTION</scope>
    <scope>DISRUPTION PHENOTYPE</scope>
    <source>
        <strain>ATCC BAA-334 / TIGR4</strain>
    </source>
</reference>
<name>KHPA_STRPN</name>